<comment type="function">
    <text evidence="1">Produces ATP from ADP in the presence of a proton gradient across the membrane. The alpha chain is a regulatory subunit.</text>
</comment>
<comment type="catalytic activity">
    <reaction evidence="1">
        <text>ATP + H2O + 4 H(+)(in) = ADP + phosphate + 5 H(+)(out)</text>
        <dbReference type="Rhea" id="RHEA:57720"/>
        <dbReference type="ChEBI" id="CHEBI:15377"/>
        <dbReference type="ChEBI" id="CHEBI:15378"/>
        <dbReference type="ChEBI" id="CHEBI:30616"/>
        <dbReference type="ChEBI" id="CHEBI:43474"/>
        <dbReference type="ChEBI" id="CHEBI:456216"/>
        <dbReference type="EC" id="7.1.2.2"/>
    </reaction>
</comment>
<comment type="subunit">
    <text evidence="1">F-type ATPases have 2 components, CF(1) - the catalytic core - and CF(0) - the membrane proton channel. CF(1) has five subunits: alpha(3), beta(3), gamma(1), delta(1), epsilon(1). CF(0) has four main subunits: a, b, b' and c.</text>
</comment>
<comment type="subcellular location">
    <subcellularLocation>
        <location evidence="1">Plastid</location>
        <location evidence="1">Chloroplast thylakoid membrane</location>
        <topology evidence="1">Peripheral membrane protein</topology>
    </subcellularLocation>
</comment>
<comment type="similarity">
    <text evidence="1">Belongs to the ATPase alpha/beta chains family.</text>
</comment>
<gene>
    <name evidence="1" type="primary">atpA</name>
</gene>
<organism>
    <name type="scientific">Oenothera argillicola</name>
    <name type="common">Appalachian evening primrose</name>
    <dbReference type="NCBI Taxonomy" id="3940"/>
    <lineage>
        <taxon>Eukaryota</taxon>
        <taxon>Viridiplantae</taxon>
        <taxon>Streptophyta</taxon>
        <taxon>Embryophyta</taxon>
        <taxon>Tracheophyta</taxon>
        <taxon>Spermatophyta</taxon>
        <taxon>Magnoliopsida</taxon>
        <taxon>eudicotyledons</taxon>
        <taxon>Gunneridae</taxon>
        <taxon>Pentapetalae</taxon>
        <taxon>rosids</taxon>
        <taxon>malvids</taxon>
        <taxon>Myrtales</taxon>
        <taxon>Onagraceae</taxon>
        <taxon>Onagroideae</taxon>
        <taxon>Onagreae</taxon>
        <taxon>Oenothera</taxon>
    </lineage>
</organism>
<feature type="chain" id="PRO_0000339100" description="ATP synthase subunit alpha, chloroplastic">
    <location>
        <begin position="1"/>
        <end position="505"/>
    </location>
</feature>
<feature type="binding site" evidence="1">
    <location>
        <begin position="170"/>
        <end position="177"/>
    </location>
    <ligand>
        <name>ATP</name>
        <dbReference type="ChEBI" id="CHEBI:30616"/>
    </ligand>
</feature>
<feature type="site" description="Required for activity" evidence="1">
    <location>
        <position position="363"/>
    </location>
</feature>
<accession>B0Z4N2</accession>
<name>ATPA_OENAR</name>
<dbReference type="EC" id="7.1.2.2" evidence="1"/>
<dbReference type="EMBL" id="EU262887">
    <property type="protein sequence ID" value="ABW98710.1"/>
    <property type="molecule type" value="Genomic_DNA"/>
</dbReference>
<dbReference type="RefSeq" id="YP_001687143.1">
    <property type="nucleotide sequence ID" value="NC_010358.2"/>
</dbReference>
<dbReference type="SMR" id="B0Z4N2"/>
<dbReference type="GeneID" id="5951876"/>
<dbReference type="GO" id="GO:0009535">
    <property type="term" value="C:chloroplast thylakoid membrane"/>
    <property type="evidence" value="ECO:0007669"/>
    <property type="project" value="UniProtKB-SubCell"/>
</dbReference>
<dbReference type="GO" id="GO:0045259">
    <property type="term" value="C:proton-transporting ATP synthase complex"/>
    <property type="evidence" value="ECO:0007669"/>
    <property type="project" value="UniProtKB-KW"/>
</dbReference>
<dbReference type="GO" id="GO:0043531">
    <property type="term" value="F:ADP binding"/>
    <property type="evidence" value="ECO:0007669"/>
    <property type="project" value="TreeGrafter"/>
</dbReference>
<dbReference type="GO" id="GO:0005524">
    <property type="term" value="F:ATP binding"/>
    <property type="evidence" value="ECO:0007669"/>
    <property type="project" value="UniProtKB-UniRule"/>
</dbReference>
<dbReference type="GO" id="GO:0046933">
    <property type="term" value="F:proton-transporting ATP synthase activity, rotational mechanism"/>
    <property type="evidence" value="ECO:0007669"/>
    <property type="project" value="UniProtKB-UniRule"/>
</dbReference>
<dbReference type="CDD" id="cd18113">
    <property type="entry name" value="ATP-synt_F1_alpha_C"/>
    <property type="match status" value="1"/>
</dbReference>
<dbReference type="CDD" id="cd18116">
    <property type="entry name" value="ATP-synt_F1_alpha_N"/>
    <property type="match status" value="1"/>
</dbReference>
<dbReference type="CDD" id="cd01132">
    <property type="entry name" value="F1-ATPase_alpha_CD"/>
    <property type="match status" value="1"/>
</dbReference>
<dbReference type="FunFam" id="1.20.150.20:FF:000001">
    <property type="entry name" value="ATP synthase subunit alpha"/>
    <property type="match status" value="1"/>
</dbReference>
<dbReference type="FunFam" id="2.40.30.20:FF:000001">
    <property type="entry name" value="ATP synthase subunit alpha"/>
    <property type="match status" value="1"/>
</dbReference>
<dbReference type="FunFam" id="3.40.50.300:FF:000002">
    <property type="entry name" value="ATP synthase subunit alpha"/>
    <property type="match status" value="1"/>
</dbReference>
<dbReference type="Gene3D" id="2.40.30.20">
    <property type="match status" value="1"/>
</dbReference>
<dbReference type="Gene3D" id="1.20.150.20">
    <property type="entry name" value="ATP synthase alpha/beta chain, C-terminal domain"/>
    <property type="match status" value="1"/>
</dbReference>
<dbReference type="Gene3D" id="3.40.50.300">
    <property type="entry name" value="P-loop containing nucleotide triphosphate hydrolases"/>
    <property type="match status" value="1"/>
</dbReference>
<dbReference type="HAMAP" id="MF_01346">
    <property type="entry name" value="ATP_synth_alpha_bact"/>
    <property type="match status" value="1"/>
</dbReference>
<dbReference type="InterPro" id="IPR023366">
    <property type="entry name" value="ATP_synth_asu-like_sf"/>
</dbReference>
<dbReference type="InterPro" id="IPR000793">
    <property type="entry name" value="ATP_synth_asu_C"/>
</dbReference>
<dbReference type="InterPro" id="IPR038376">
    <property type="entry name" value="ATP_synth_asu_C_sf"/>
</dbReference>
<dbReference type="InterPro" id="IPR033732">
    <property type="entry name" value="ATP_synth_F1_a_nt-bd_dom"/>
</dbReference>
<dbReference type="InterPro" id="IPR005294">
    <property type="entry name" value="ATP_synth_F1_asu"/>
</dbReference>
<dbReference type="InterPro" id="IPR020003">
    <property type="entry name" value="ATPase_a/bsu_AS"/>
</dbReference>
<dbReference type="InterPro" id="IPR004100">
    <property type="entry name" value="ATPase_F1/V1/A1_a/bsu_N"/>
</dbReference>
<dbReference type="InterPro" id="IPR036121">
    <property type="entry name" value="ATPase_F1/V1/A1_a/bsu_N_sf"/>
</dbReference>
<dbReference type="InterPro" id="IPR000194">
    <property type="entry name" value="ATPase_F1/V1/A1_a/bsu_nucl-bd"/>
</dbReference>
<dbReference type="InterPro" id="IPR027417">
    <property type="entry name" value="P-loop_NTPase"/>
</dbReference>
<dbReference type="NCBIfam" id="TIGR00962">
    <property type="entry name" value="atpA"/>
    <property type="match status" value="1"/>
</dbReference>
<dbReference type="NCBIfam" id="NF009884">
    <property type="entry name" value="PRK13343.1"/>
    <property type="match status" value="1"/>
</dbReference>
<dbReference type="PANTHER" id="PTHR48082">
    <property type="entry name" value="ATP SYNTHASE SUBUNIT ALPHA, MITOCHONDRIAL"/>
    <property type="match status" value="1"/>
</dbReference>
<dbReference type="PANTHER" id="PTHR48082:SF2">
    <property type="entry name" value="ATP SYNTHASE SUBUNIT ALPHA, MITOCHONDRIAL"/>
    <property type="match status" value="1"/>
</dbReference>
<dbReference type="Pfam" id="PF00006">
    <property type="entry name" value="ATP-synt_ab"/>
    <property type="match status" value="1"/>
</dbReference>
<dbReference type="Pfam" id="PF00306">
    <property type="entry name" value="ATP-synt_ab_C"/>
    <property type="match status" value="1"/>
</dbReference>
<dbReference type="Pfam" id="PF02874">
    <property type="entry name" value="ATP-synt_ab_N"/>
    <property type="match status" value="1"/>
</dbReference>
<dbReference type="PIRSF" id="PIRSF039088">
    <property type="entry name" value="F_ATPase_subunit_alpha"/>
    <property type="match status" value="1"/>
</dbReference>
<dbReference type="SUPFAM" id="SSF47917">
    <property type="entry name" value="C-terminal domain of alpha and beta subunits of F1 ATP synthase"/>
    <property type="match status" value="1"/>
</dbReference>
<dbReference type="SUPFAM" id="SSF50615">
    <property type="entry name" value="N-terminal domain of alpha and beta subunits of F1 ATP synthase"/>
    <property type="match status" value="1"/>
</dbReference>
<dbReference type="SUPFAM" id="SSF52540">
    <property type="entry name" value="P-loop containing nucleoside triphosphate hydrolases"/>
    <property type="match status" value="1"/>
</dbReference>
<dbReference type="PROSITE" id="PS00152">
    <property type="entry name" value="ATPASE_ALPHA_BETA"/>
    <property type="match status" value="1"/>
</dbReference>
<evidence type="ECO:0000255" key="1">
    <source>
        <dbReference type="HAMAP-Rule" id="MF_01346"/>
    </source>
</evidence>
<reference key="1">
    <citation type="journal article" date="2008" name="Nucleic Acids Res.">
        <title>The complete nucleotide sequences of the five genetically distinct plastid genomes of Oenothera, subsection Oenothera: I. Sequence evaluation and plastome evolution.</title>
        <authorList>
            <person name="Greiner S."/>
            <person name="Wang X."/>
            <person name="Rauwolf U."/>
            <person name="Silber M.V."/>
            <person name="Mayer K."/>
            <person name="Meurer J."/>
            <person name="Haberer G."/>
            <person name="Herrmann R.G."/>
        </authorList>
    </citation>
    <scope>NUCLEOTIDE SEQUENCE [LARGE SCALE GENOMIC DNA]</scope>
    <source>
        <strain>cv. Douthat 1</strain>
    </source>
</reference>
<protein>
    <recommendedName>
        <fullName evidence="1">ATP synthase subunit alpha, chloroplastic</fullName>
        <ecNumber evidence="1">7.1.2.2</ecNumber>
    </recommendedName>
    <alternativeName>
        <fullName evidence="1">ATP synthase F1 sector subunit alpha</fullName>
    </alternativeName>
    <alternativeName>
        <fullName evidence="1">F-ATPase subunit alpha</fullName>
    </alternativeName>
</protein>
<sequence>MATIRADEISNIIRERIEQYNREVKIVNTGTVLQVGDGIARIYGLDEVMAGELVEFEEGTIGIALNLESKNVGVVLMGDGLMIQEGSSVKATGRIAQIPVSEAYLGRVINALAKPIDGRGEISSSESRLIESPAPGIISRRSVYEPLQTGLIAIDAMIPIGRGQRELIIGDRQTGKTAVATDTILNQQGNNVICVYVAIGQKASSVAQVVNALQERGAMEYTIVVAEAADSPATLQYLAPYTGAALAEYFMYRERHTLIIYDDPSKQAQAYRQMSLLLRRPPGREAYPGDVFYLHSRLLERAAKLSSRLGEGSMTALPIVETQSGDVSAYIPTNVISITDGQIFLSADLFNAGIRPAINVGISVSRVGSAAQIKAMKQVAGKLKLELAQFAELEAFAQFSSDLDKATQNQLARGQRLRELLKQSQAKPLTVAEQILTIYTGTNGYLDSFEIAQVRKFLDELRDYVKTRKPQFEEIISSTKIFTEEAQALLKDAIQEQKELFLVQE</sequence>
<keyword id="KW-0066">ATP synthesis</keyword>
<keyword id="KW-0067">ATP-binding</keyword>
<keyword id="KW-0139">CF(1)</keyword>
<keyword id="KW-0150">Chloroplast</keyword>
<keyword id="KW-0375">Hydrogen ion transport</keyword>
<keyword id="KW-0406">Ion transport</keyword>
<keyword id="KW-0472">Membrane</keyword>
<keyword id="KW-0547">Nucleotide-binding</keyword>
<keyword id="KW-0934">Plastid</keyword>
<keyword id="KW-0793">Thylakoid</keyword>
<keyword id="KW-1278">Translocase</keyword>
<keyword id="KW-0813">Transport</keyword>
<geneLocation type="chloroplast"/>
<proteinExistence type="inferred from homology"/>